<gene>
    <name type="primary">R</name>
</gene>
<accession>P68921</accession>
<accession>Q9T0Q1</accession>
<comment type="function">
    <text evidence="2">Signal-arrest-release (SAR) endolysin with lysozyme activity that degrades host peptidoglycans and participates with the pinholin and spanin proteins in the sequential events which lead to programmed host cell lysis releasing the mature viral particles. Once the pinholin has permeabilized the host cell membrane, the SAR-endolysin is released into the periplasm where it breaks down the peptidoglycan layer.</text>
</comment>
<comment type="catalytic activity">
    <reaction evidence="2">
        <text>Hydrolysis of (1-&gt;4)-beta-linkages between N-acetylmuramic acid and N-acetyl-D-glucosamine residues in a peptidoglycan and between N-acetyl-D-glucosamine residues in chitodextrins.</text>
        <dbReference type="EC" id="3.2.1.17"/>
    </reaction>
</comment>
<comment type="subcellular location">
    <subcellularLocation>
        <location evidence="2">Host cell inner membrane</location>
        <topology evidence="2">Single-pass type II membrane protein</topology>
        <orientation evidence="2">Periplasmic side</orientation>
    </subcellularLocation>
    <text evidence="2">Secreted as a signal-anchored, membrane-tethered, inactive endolysin which is subsequently refolded, activated and released by membrane depolarization driven by the pinholin.</text>
</comment>
<comment type="domain">
    <text evidence="2">The signal-anchor, which may also be an uncleaved signal sequence tethers the SAR-endolysin to the membrane until the latter is depolarized by the holin, resulting in the escape of SAR-endolysin from the membrane.</text>
</comment>
<comment type="similarity">
    <text evidence="2">Belongs to the glycosyl hydrolase 24 family.</text>
</comment>
<sequence>MSRKLRYGLSAAVLALIAAGASAPEILDQFLDEKEGNHTTAYRDGAGIWTICRGATRVDGKPVIPGMKLSKEKCDRVNAIERDKALAWVEKNIKVPLTEPQKAGIASFCPYNIGPGKCFPSTFYRRINAGDRKGACEAIRWWIKDGGRDCRIRSNNCYGQVSRRDQESALACWGIDR</sequence>
<evidence type="ECO:0000255" key="1"/>
<evidence type="ECO:0000255" key="2">
    <source>
        <dbReference type="HAMAP-Rule" id="MF_04136"/>
    </source>
</evidence>
<organismHost>
    <name type="scientific">Escherichia coli O157:H7</name>
    <dbReference type="NCBI Taxonomy" id="83334"/>
</organismHost>
<feature type="chain" id="PRO_0000218090" description="SAR-endolysin">
    <location>
        <begin position="1"/>
        <end position="177"/>
    </location>
</feature>
<feature type="transmembrane region" description="Helical; Signal-anchor for type II membrane protein" evidence="1">
    <location>
        <begin position="1"/>
        <end position="23"/>
    </location>
</feature>
<feature type="active site" description="Proton donor/acceptor" evidence="2">
    <location>
        <position position="35"/>
    </location>
</feature>
<feature type="active site" description="Proton donor/acceptor" evidence="2">
    <location>
        <position position="44"/>
    </location>
</feature>
<organism>
    <name type="scientific">Enterobacteria phage VT2-Sa</name>
    <name type="common">Bacteriophage VT2-Sa</name>
    <dbReference type="NCBI Taxonomy" id="97081"/>
    <lineage>
        <taxon>Viruses</taxon>
        <taxon>Duplodnaviria</taxon>
        <taxon>Heunggongvirae</taxon>
        <taxon>Uroviricota</taxon>
        <taxon>Caudoviricetes</taxon>
        <taxon>Sepvirinae</taxon>
        <taxon>Traversvirus</taxon>
        <taxon>Traversvirus II</taxon>
    </lineage>
</organism>
<name>ENLYS_BPVT2</name>
<proteinExistence type="inferred from homology"/>
<keyword id="KW-0929">Antimicrobial</keyword>
<keyword id="KW-0081">Bacteriolytic enzyme</keyword>
<keyword id="KW-0204">Cytolysis</keyword>
<keyword id="KW-0326">Glycosidase</keyword>
<keyword id="KW-1030">Host cell inner membrane</keyword>
<keyword id="KW-0578">Host cell lysis by virus</keyword>
<keyword id="KW-1032">Host cell membrane</keyword>
<keyword id="KW-1043">Host membrane</keyword>
<keyword id="KW-0378">Hydrolase</keyword>
<keyword id="KW-0472">Membrane</keyword>
<keyword id="KW-1185">Reference proteome</keyword>
<keyword id="KW-0735">Signal-anchor</keyword>
<keyword id="KW-0812">Transmembrane</keyword>
<keyword id="KW-1133">Transmembrane helix</keyword>
<keyword id="KW-1188">Viral release from host cell</keyword>
<reference key="1">
    <citation type="journal article" date="1999" name="DNA Res.">
        <title>Sequence analysis of Stx2-converting phage VT2-Sa shows a great divergence in early regulation and replication regions.</title>
        <authorList>
            <person name="Miyamoto H."/>
            <person name="Nakai W."/>
            <person name="Yajima N."/>
            <person name="Fujibayashi A."/>
            <person name="Higuchi T."/>
            <person name="Sato K."/>
            <person name="Matsushiro A."/>
        </authorList>
    </citation>
    <scope>NUCLEOTIDE SEQUENCE [LARGE SCALE GENOMIC DNA]</scope>
</reference>
<protein>
    <recommendedName>
        <fullName evidence="2">SAR-endolysin</fullName>
        <ecNumber evidence="2">3.2.1.17</ecNumber>
    </recommendedName>
    <alternativeName>
        <fullName evidence="2">Endolysin</fullName>
    </alternativeName>
    <alternativeName>
        <fullName evidence="2">Lysis protein</fullName>
    </alternativeName>
    <alternativeName>
        <fullName evidence="2">Lysozyme</fullName>
    </alternativeName>
    <alternativeName>
        <fullName evidence="2">Muramidase</fullName>
    </alternativeName>
</protein>
<dbReference type="EC" id="3.2.1.17" evidence="2"/>
<dbReference type="EMBL" id="AP000363">
    <property type="protein sequence ID" value="BAA84328.1"/>
    <property type="molecule type" value="Genomic_DNA"/>
</dbReference>
<dbReference type="RefSeq" id="NP_050544.1">
    <property type="nucleotide sequence ID" value="NC_000902.1"/>
</dbReference>
<dbReference type="SMR" id="P68921"/>
<dbReference type="CAZy" id="GH24">
    <property type="family name" value="Glycoside Hydrolase Family 24"/>
</dbReference>
<dbReference type="GeneID" id="1262225"/>
<dbReference type="KEGG" id="vg:1262225"/>
<dbReference type="OrthoDB" id="18172at10239"/>
<dbReference type="Proteomes" id="UP000002665">
    <property type="component" value="Genome"/>
</dbReference>
<dbReference type="GO" id="GO:0020002">
    <property type="term" value="C:host cell plasma membrane"/>
    <property type="evidence" value="ECO:0007669"/>
    <property type="project" value="UniProtKB-SubCell"/>
</dbReference>
<dbReference type="GO" id="GO:0016020">
    <property type="term" value="C:membrane"/>
    <property type="evidence" value="ECO:0007669"/>
    <property type="project" value="UniProtKB-KW"/>
</dbReference>
<dbReference type="GO" id="GO:0003796">
    <property type="term" value="F:lysozyme activity"/>
    <property type="evidence" value="ECO:0007669"/>
    <property type="project" value="UniProtKB-EC"/>
</dbReference>
<dbReference type="GO" id="GO:0016998">
    <property type="term" value="P:cell wall macromolecule catabolic process"/>
    <property type="evidence" value="ECO:0007669"/>
    <property type="project" value="InterPro"/>
</dbReference>
<dbReference type="GO" id="GO:0042742">
    <property type="term" value="P:defense response to bacterium"/>
    <property type="evidence" value="ECO:0007669"/>
    <property type="project" value="UniProtKB-KW"/>
</dbReference>
<dbReference type="GO" id="GO:0031640">
    <property type="term" value="P:killing of cells of another organism"/>
    <property type="evidence" value="ECO:0007669"/>
    <property type="project" value="UniProtKB-KW"/>
</dbReference>
<dbReference type="GO" id="GO:0009253">
    <property type="term" value="P:peptidoglycan catabolic process"/>
    <property type="evidence" value="ECO:0007669"/>
    <property type="project" value="InterPro"/>
</dbReference>
<dbReference type="CDD" id="cd16900">
    <property type="entry name" value="endolysin_R21-like"/>
    <property type="match status" value="1"/>
</dbReference>
<dbReference type="Gene3D" id="1.10.530.40">
    <property type="match status" value="1"/>
</dbReference>
<dbReference type="HAMAP" id="MF_04110">
    <property type="entry name" value="ENDOLYSIN_T4"/>
    <property type="match status" value="1"/>
</dbReference>
<dbReference type="HAMAP" id="MF_04136">
    <property type="entry name" value="SAR_ENDOLYSIN"/>
    <property type="match status" value="1"/>
</dbReference>
<dbReference type="InterPro" id="IPR051018">
    <property type="entry name" value="Bacteriophage_GH24"/>
</dbReference>
<dbReference type="InterPro" id="IPR034690">
    <property type="entry name" value="Endolysin_T4_type"/>
</dbReference>
<dbReference type="InterPro" id="IPR002196">
    <property type="entry name" value="Glyco_hydro_24"/>
</dbReference>
<dbReference type="InterPro" id="IPR023346">
    <property type="entry name" value="Lysozyme-like_dom_sf"/>
</dbReference>
<dbReference type="InterPro" id="IPR023347">
    <property type="entry name" value="Lysozyme_dom_sf"/>
</dbReference>
<dbReference type="InterPro" id="IPR043688">
    <property type="entry name" value="SAR_endolysin-like"/>
</dbReference>
<dbReference type="PANTHER" id="PTHR38107">
    <property type="match status" value="1"/>
</dbReference>
<dbReference type="PANTHER" id="PTHR38107:SF3">
    <property type="entry name" value="LYSOZYME RRRD-RELATED"/>
    <property type="match status" value="1"/>
</dbReference>
<dbReference type="Pfam" id="PF00959">
    <property type="entry name" value="Phage_lysozyme"/>
    <property type="match status" value="1"/>
</dbReference>
<dbReference type="SUPFAM" id="SSF53955">
    <property type="entry name" value="Lysozyme-like"/>
    <property type="match status" value="1"/>
</dbReference>